<gene>
    <name evidence="1" type="primary">queC</name>
    <name type="ordered locus">RAF_ORF0976</name>
</gene>
<comment type="function">
    <text evidence="1">Catalyzes the ATP-dependent conversion of 7-carboxy-7-deazaguanine (CDG) to 7-cyano-7-deazaguanine (preQ(0)).</text>
</comment>
<comment type="catalytic activity">
    <reaction evidence="1">
        <text>7-carboxy-7-deazaguanine + NH4(+) + ATP = 7-cyano-7-deazaguanine + ADP + phosphate + H2O + H(+)</text>
        <dbReference type="Rhea" id="RHEA:27982"/>
        <dbReference type="ChEBI" id="CHEBI:15377"/>
        <dbReference type="ChEBI" id="CHEBI:15378"/>
        <dbReference type="ChEBI" id="CHEBI:28938"/>
        <dbReference type="ChEBI" id="CHEBI:30616"/>
        <dbReference type="ChEBI" id="CHEBI:43474"/>
        <dbReference type="ChEBI" id="CHEBI:45075"/>
        <dbReference type="ChEBI" id="CHEBI:61036"/>
        <dbReference type="ChEBI" id="CHEBI:456216"/>
        <dbReference type="EC" id="6.3.4.20"/>
    </reaction>
</comment>
<comment type="cofactor">
    <cofactor evidence="1">
        <name>Zn(2+)</name>
        <dbReference type="ChEBI" id="CHEBI:29105"/>
    </cofactor>
    <text evidence="1">Binds 1 zinc ion per subunit.</text>
</comment>
<comment type="pathway">
    <text evidence="1">Purine metabolism; 7-cyano-7-deazaguanine biosynthesis.</text>
</comment>
<comment type="similarity">
    <text evidence="1">Belongs to the QueC family.</text>
</comment>
<evidence type="ECO:0000255" key="1">
    <source>
        <dbReference type="HAMAP-Rule" id="MF_01633"/>
    </source>
</evidence>
<keyword id="KW-0067">ATP-binding</keyword>
<keyword id="KW-0436">Ligase</keyword>
<keyword id="KW-0479">Metal-binding</keyword>
<keyword id="KW-0547">Nucleotide-binding</keyword>
<keyword id="KW-0671">Queuosine biosynthesis</keyword>
<keyword id="KW-0862">Zinc</keyword>
<feature type="chain" id="PRO_1000215798" description="7-cyano-7-deazaguanine synthase">
    <location>
        <begin position="1"/>
        <end position="228"/>
    </location>
</feature>
<feature type="binding site" evidence="1">
    <location>
        <begin position="9"/>
        <end position="19"/>
    </location>
    <ligand>
        <name>ATP</name>
        <dbReference type="ChEBI" id="CHEBI:30616"/>
    </ligand>
</feature>
<feature type="binding site" evidence="1">
    <location>
        <position position="193"/>
    </location>
    <ligand>
        <name>Zn(2+)</name>
        <dbReference type="ChEBI" id="CHEBI:29105"/>
    </ligand>
</feature>
<feature type="binding site" evidence="1">
    <location>
        <position position="203"/>
    </location>
    <ligand>
        <name>Zn(2+)</name>
        <dbReference type="ChEBI" id="CHEBI:29105"/>
    </ligand>
</feature>
<feature type="binding site" evidence="1">
    <location>
        <position position="206"/>
    </location>
    <ligand>
        <name>Zn(2+)</name>
        <dbReference type="ChEBI" id="CHEBI:29105"/>
    </ligand>
</feature>
<feature type="binding site" evidence="1">
    <location>
        <position position="209"/>
    </location>
    <ligand>
        <name>Zn(2+)</name>
        <dbReference type="ChEBI" id="CHEBI:29105"/>
    </ligand>
</feature>
<accession>C3PLH1</accession>
<protein>
    <recommendedName>
        <fullName evidence="1">7-cyano-7-deazaguanine synthase</fullName>
        <ecNumber evidence="1">6.3.4.20</ecNumber>
    </recommendedName>
    <alternativeName>
        <fullName evidence="1">7-cyano-7-carbaguanine synthase</fullName>
    </alternativeName>
    <alternativeName>
        <fullName evidence="1">PreQ(0) synthase</fullName>
    </alternativeName>
    <alternativeName>
        <fullName evidence="1">Queuosine biosynthesis protein QueC</fullName>
    </alternativeName>
</protein>
<organism>
    <name type="scientific">Rickettsia africae (strain ESF-5)</name>
    <dbReference type="NCBI Taxonomy" id="347255"/>
    <lineage>
        <taxon>Bacteria</taxon>
        <taxon>Pseudomonadati</taxon>
        <taxon>Pseudomonadota</taxon>
        <taxon>Alphaproteobacteria</taxon>
        <taxon>Rickettsiales</taxon>
        <taxon>Rickettsiaceae</taxon>
        <taxon>Rickettsieae</taxon>
        <taxon>Rickettsia</taxon>
        <taxon>spotted fever group</taxon>
    </lineage>
</organism>
<sequence>MKKKAVILLSGGPDSTTVLEIVSKTDYEIYALSFNYHRRNSLEVQKIQGLIKDYNVKQHRVINIDLQSFIGSALTDDNIDVPKFKNTDQLPSDIPVTYVPARNTIFLSYALGVAEVIGARDIFIGVHTNDYTNYPDCRPEYIKSFEAMANLATRVGVNGEKITIHAPLINMTKEQIIKKGLELGVDYSKTISCYDPTEDGLSCGQCLSCIARLDAFKRNNVQDPIKYV</sequence>
<proteinExistence type="inferred from homology"/>
<dbReference type="EC" id="6.3.4.20" evidence="1"/>
<dbReference type="EMBL" id="CP001612">
    <property type="protein sequence ID" value="ACP53811.1"/>
    <property type="molecule type" value="Genomic_DNA"/>
</dbReference>
<dbReference type="RefSeq" id="WP_012719954.1">
    <property type="nucleotide sequence ID" value="NC_012633.1"/>
</dbReference>
<dbReference type="SMR" id="C3PLH1"/>
<dbReference type="KEGG" id="raf:RAF_ORF0976"/>
<dbReference type="HOGENOM" id="CLU_081854_1_1_5"/>
<dbReference type="UniPathway" id="UPA00391"/>
<dbReference type="Proteomes" id="UP000002305">
    <property type="component" value="Chromosome"/>
</dbReference>
<dbReference type="GO" id="GO:0005524">
    <property type="term" value="F:ATP binding"/>
    <property type="evidence" value="ECO:0007669"/>
    <property type="project" value="UniProtKB-UniRule"/>
</dbReference>
<dbReference type="GO" id="GO:0016879">
    <property type="term" value="F:ligase activity, forming carbon-nitrogen bonds"/>
    <property type="evidence" value="ECO:0007669"/>
    <property type="project" value="UniProtKB-UniRule"/>
</dbReference>
<dbReference type="GO" id="GO:0008270">
    <property type="term" value="F:zinc ion binding"/>
    <property type="evidence" value="ECO:0007669"/>
    <property type="project" value="UniProtKB-UniRule"/>
</dbReference>
<dbReference type="GO" id="GO:0008616">
    <property type="term" value="P:queuosine biosynthetic process"/>
    <property type="evidence" value="ECO:0007669"/>
    <property type="project" value="UniProtKB-UniRule"/>
</dbReference>
<dbReference type="CDD" id="cd01995">
    <property type="entry name" value="QueC-like"/>
    <property type="match status" value="1"/>
</dbReference>
<dbReference type="Gene3D" id="3.40.50.620">
    <property type="entry name" value="HUPs"/>
    <property type="match status" value="1"/>
</dbReference>
<dbReference type="HAMAP" id="MF_01633">
    <property type="entry name" value="QueC"/>
    <property type="match status" value="1"/>
</dbReference>
<dbReference type="InterPro" id="IPR018317">
    <property type="entry name" value="QueC"/>
</dbReference>
<dbReference type="InterPro" id="IPR014729">
    <property type="entry name" value="Rossmann-like_a/b/a_fold"/>
</dbReference>
<dbReference type="NCBIfam" id="TIGR00364">
    <property type="entry name" value="7-cyano-7-deazaguanine synthase QueC"/>
    <property type="match status" value="1"/>
</dbReference>
<dbReference type="PANTHER" id="PTHR42914">
    <property type="entry name" value="7-CYANO-7-DEAZAGUANINE SYNTHASE"/>
    <property type="match status" value="1"/>
</dbReference>
<dbReference type="PANTHER" id="PTHR42914:SF1">
    <property type="entry name" value="7-CYANO-7-DEAZAGUANINE SYNTHASE"/>
    <property type="match status" value="1"/>
</dbReference>
<dbReference type="Pfam" id="PF06508">
    <property type="entry name" value="QueC"/>
    <property type="match status" value="1"/>
</dbReference>
<dbReference type="PIRSF" id="PIRSF006293">
    <property type="entry name" value="ExsB"/>
    <property type="match status" value="1"/>
</dbReference>
<dbReference type="SUPFAM" id="SSF52402">
    <property type="entry name" value="Adenine nucleotide alpha hydrolases-like"/>
    <property type="match status" value="1"/>
</dbReference>
<reference key="1">
    <citation type="journal article" date="2009" name="BMC Genomics">
        <title>Analysis of the Rickettsia africae genome reveals that virulence acquisition in Rickettsia species may be explained by genome reduction.</title>
        <authorList>
            <person name="Fournier P.-E."/>
            <person name="El Karkouri K."/>
            <person name="Leroy Q."/>
            <person name="Robert C."/>
            <person name="Giumelli B."/>
            <person name="Renesto P."/>
            <person name="Socolovschi C."/>
            <person name="Parola P."/>
            <person name="Audic S."/>
            <person name="Raoult D."/>
        </authorList>
    </citation>
    <scope>NUCLEOTIDE SEQUENCE [LARGE SCALE GENOMIC DNA]</scope>
    <source>
        <strain>ESF-5</strain>
    </source>
</reference>
<name>QUEC_RICAE</name>